<organism>
    <name type="scientific">Saccharomyces cerevisiae (strain ATCC 204508 / S288c)</name>
    <name type="common">Baker's yeast</name>
    <dbReference type="NCBI Taxonomy" id="559292"/>
    <lineage>
        <taxon>Eukaryota</taxon>
        <taxon>Fungi</taxon>
        <taxon>Dikarya</taxon>
        <taxon>Ascomycota</taxon>
        <taxon>Saccharomycotina</taxon>
        <taxon>Saccharomycetes</taxon>
        <taxon>Saccharomycetales</taxon>
        <taxon>Saccharomycetaceae</taxon>
        <taxon>Saccharomyces</taxon>
    </lineage>
</organism>
<protein>
    <recommendedName>
        <fullName>Putative uncharacterized protein YHR214C-E</fullName>
    </recommendedName>
</protein>
<proteinExistence type="predicted"/>
<accession>Q8TGK0</accession>
<accession>D3DLG9</accession>
<gene>
    <name type="ordered locus">YHR214C-E</name>
</gene>
<keyword id="KW-1185">Reference proteome</keyword>
<name>YH1E_YEAST</name>
<sequence>MYKITTIYLWLKSYLSFFIGLDNLDFLTLIRFFQCRLQNKLGLQDILDFFCNLCGHSMVRTCNMVEAAQKQNRITFGSIYVKLHPLVKLCTGIVWAPRV</sequence>
<feature type="chain" id="PRO_0000202437" description="Putative uncharacterized protein YHR214C-E">
    <location>
        <begin position="1"/>
        <end position="99"/>
    </location>
</feature>
<reference key="1">
    <citation type="journal article" date="1994" name="Science">
        <title>Complete nucleotide sequence of Saccharomyces cerevisiae chromosome VIII.</title>
        <authorList>
            <person name="Johnston M."/>
            <person name="Andrews S."/>
            <person name="Brinkman R."/>
            <person name="Cooper J."/>
            <person name="Ding H."/>
            <person name="Dover J."/>
            <person name="Du Z."/>
            <person name="Favello A."/>
            <person name="Fulton L."/>
            <person name="Gattung S."/>
            <person name="Geisel C."/>
            <person name="Kirsten J."/>
            <person name="Kucaba T."/>
            <person name="Hillier L.W."/>
            <person name="Jier M."/>
            <person name="Johnston L."/>
            <person name="Langston Y."/>
            <person name="Latreille P."/>
            <person name="Louis E.J."/>
            <person name="Macri C."/>
            <person name="Mardis E."/>
            <person name="Menezes S."/>
            <person name="Mouser L."/>
            <person name="Nhan M."/>
            <person name="Rifkin L."/>
            <person name="Riles L."/>
            <person name="St Peter H."/>
            <person name="Trevaskis E."/>
            <person name="Vaughan K."/>
            <person name="Vignati D."/>
            <person name="Wilcox L."/>
            <person name="Wohldman P."/>
            <person name="Waterston R."/>
            <person name="Wilson R."/>
            <person name="Vaudin M."/>
        </authorList>
    </citation>
    <scope>NUCLEOTIDE SEQUENCE [LARGE SCALE GENOMIC DNA]</scope>
    <source>
        <strain>ATCC 204508 / S288c</strain>
    </source>
</reference>
<reference key="2">
    <citation type="journal article" date="2014" name="G3 (Bethesda)">
        <title>The reference genome sequence of Saccharomyces cerevisiae: Then and now.</title>
        <authorList>
            <person name="Engel S.R."/>
            <person name="Dietrich F.S."/>
            <person name="Fisk D.G."/>
            <person name="Binkley G."/>
            <person name="Balakrishnan R."/>
            <person name="Costanzo M.C."/>
            <person name="Dwight S.S."/>
            <person name="Hitz B.C."/>
            <person name="Karra K."/>
            <person name="Nash R.S."/>
            <person name="Weng S."/>
            <person name="Wong E.D."/>
            <person name="Lloyd P."/>
            <person name="Skrzypek M.S."/>
            <person name="Miyasato S.R."/>
            <person name="Simison M."/>
            <person name="Cherry J.M."/>
        </authorList>
    </citation>
    <scope>GENOME REANNOTATION</scope>
    <source>
        <strain>ATCC 204508 / S288c</strain>
    </source>
</reference>
<reference key="3">
    <citation type="journal article" date="2002" name="Nat. Biotechnol.">
        <title>An integrated approach for finding overlooked genes in yeast.</title>
        <authorList>
            <person name="Kumar A."/>
            <person name="Harrison P.M."/>
            <person name="Cheung K.-H."/>
            <person name="Lan N."/>
            <person name="Echols N."/>
            <person name="Bertone P."/>
            <person name="Miller P."/>
            <person name="Gerstein M.B."/>
            <person name="Snyder M."/>
        </authorList>
    </citation>
    <scope>NUCLEOTIDE SEQUENCE [GENOMIC DNA]</scope>
</reference>
<dbReference type="EMBL" id="U00029">
    <property type="status" value="NOT_ANNOTATED_CDS"/>
    <property type="molecule type" value="Genomic_DNA"/>
</dbReference>
<dbReference type="EMBL" id="AF479998">
    <property type="protein sequence ID" value="AAL79311.1"/>
    <property type="molecule type" value="Genomic_DNA"/>
</dbReference>
<dbReference type="EMBL" id="BK006934">
    <property type="protein sequence ID" value="DAA06913.1"/>
    <property type="molecule type" value="Genomic_DNA"/>
</dbReference>
<dbReference type="RefSeq" id="NP_878095.3">
    <property type="nucleotide sequence ID" value="NM_001184602.3"/>
</dbReference>
<dbReference type="BioGRID" id="37077">
    <property type="interactions" value="1"/>
</dbReference>
<dbReference type="FunCoup" id="Q8TGK0">
    <property type="interactions" value="7"/>
</dbReference>
<dbReference type="STRING" id="4932.YHR214C-E"/>
<dbReference type="PaxDb" id="4932-YHR214C-E"/>
<dbReference type="EnsemblFungi" id="YHR214C-E_mRNA">
    <property type="protein sequence ID" value="YHR214C-E"/>
    <property type="gene ID" value="YHR214C-E"/>
</dbReference>
<dbReference type="GeneID" id="1466535"/>
<dbReference type="KEGG" id="sce:YHR214C-E"/>
<dbReference type="AGR" id="SGD:S000028654"/>
<dbReference type="SGD" id="S000028654">
    <property type="gene designation" value="YHR214C-E"/>
</dbReference>
<dbReference type="VEuPathDB" id="FungiDB:YHR214C-E"/>
<dbReference type="GeneTree" id="ENSGT01110000271551"/>
<dbReference type="HOGENOM" id="CLU_2322179_0_0_1"/>
<dbReference type="InParanoid" id="Q8TGK0"/>
<dbReference type="BioCyc" id="YEAST:G3O-31274-MONOMER"/>
<dbReference type="PRO" id="PR:Q8TGK0"/>
<dbReference type="Proteomes" id="UP000002311">
    <property type="component" value="Chromosome VIII"/>
</dbReference>
<dbReference type="RNAct" id="Q8TGK0">
    <property type="molecule type" value="protein"/>
</dbReference>